<sequence length="316" mass="34777">MHAYTLIAPGKINLYLEIIGDRPDGYHELIMILQSIDLADRITLRPNGVQQFRLYCSHPQVPTDESNLAYRAAKLMQQEFPKQFDNFGGVDITIDKRIPVAAGLAGGSTNGAAVLVGLNLIWQLGLTQPELQGLASLLGSDVPFCVSGGTAIATGRGEQLDPIYDLDNLWVVLAKYTSIAVSTPWAYKTYRQLFNNTYISDRERIQARTHQVHAGPLMGAILQKDGAKIGRLLHNDLEKVVLPEYPQVAHLRETMAKMGGFGTMMSGSGPTVFTLCESYAQAEKIKQHIRENISDIDLQLWVAQLSNMGIQVEIAG</sequence>
<feature type="chain" id="PRO_1000116925" description="4-diphosphocytidyl-2-C-methyl-D-erythritol kinase">
    <location>
        <begin position="1"/>
        <end position="316"/>
    </location>
</feature>
<feature type="active site" evidence="1">
    <location>
        <position position="11"/>
    </location>
</feature>
<feature type="active site" evidence="1">
    <location>
        <position position="141"/>
    </location>
</feature>
<feature type="binding site" evidence="1">
    <location>
        <begin position="99"/>
        <end position="109"/>
    </location>
    <ligand>
        <name>ATP</name>
        <dbReference type="ChEBI" id="CHEBI:30616"/>
    </ligand>
</feature>
<keyword id="KW-0067">ATP-binding</keyword>
<keyword id="KW-0414">Isoprene biosynthesis</keyword>
<keyword id="KW-0418">Kinase</keyword>
<keyword id="KW-0547">Nucleotide-binding</keyword>
<keyword id="KW-1185">Reference proteome</keyword>
<keyword id="KW-0808">Transferase</keyword>
<gene>
    <name evidence="1" type="primary">ispE</name>
    <name type="ordered locus">PCC7424_4466</name>
</gene>
<organism>
    <name type="scientific">Gloeothece citriformis (strain PCC 7424)</name>
    <name type="common">Cyanothece sp. (strain PCC 7424)</name>
    <dbReference type="NCBI Taxonomy" id="65393"/>
    <lineage>
        <taxon>Bacteria</taxon>
        <taxon>Bacillati</taxon>
        <taxon>Cyanobacteriota</taxon>
        <taxon>Cyanophyceae</taxon>
        <taxon>Oscillatoriophycideae</taxon>
        <taxon>Chroococcales</taxon>
        <taxon>Aphanothecaceae</taxon>
        <taxon>Gloeothece</taxon>
        <taxon>Gloeothece citriformis</taxon>
    </lineage>
</organism>
<dbReference type="EC" id="2.7.1.148" evidence="1"/>
<dbReference type="EMBL" id="CP001291">
    <property type="protein sequence ID" value="ACK72830.1"/>
    <property type="molecule type" value="Genomic_DNA"/>
</dbReference>
<dbReference type="RefSeq" id="WP_015956414.1">
    <property type="nucleotide sequence ID" value="NC_011729.1"/>
</dbReference>
<dbReference type="SMR" id="B7K961"/>
<dbReference type="STRING" id="65393.PCC7424_4466"/>
<dbReference type="KEGG" id="cyc:PCC7424_4466"/>
<dbReference type="eggNOG" id="COG1947">
    <property type="taxonomic scope" value="Bacteria"/>
</dbReference>
<dbReference type="HOGENOM" id="CLU_053057_1_1_3"/>
<dbReference type="OrthoDB" id="9809438at2"/>
<dbReference type="UniPathway" id="UPA00056">
    <property type="reaction ID" value="UER00094"/>
</dbReference>
<dbReference type="Proteomes" id="UP000002384">
    <property type="component" value="Chromosome"/>
</dbReference>
<dbReference type="GO" id="GO:0050515">
    <property type="term" value="F:4-(cytidine 5'-diphospho)-2-C-methyl-D-erythritol kinase activity"/>
    <property type="evidence" value="ECO:0007669"/>
    <property type="project" value="UniProtKB-UniRule"/>
</dbReference>
<dbReference type="GO" id="GO:0005524">
    <property type="term" value="F:ATP binding"/>
    <property type="evidence" value="ECO:0007669"/>
    <property type="project" value="UniProtKB-UniRule"/>
</dbReference>
<dbReference type="GO" id="GO:0019288">
    <property type="term" value="P:isopentenyl diphosphate biosynthetic process, methylerythritol 4-phosphate pathway"/>
    <property type="evidence" value="ECO:0007669"/>
    <property type="project" value="UniProtKB-UniRule"/>
</dbReference>
<dbReference type="GO" id="GO:0016114">
    <property type="term" value="P:terpenoid biosynthetic process"/>
    <property type="evidence" value="ECO:0007669"/>
    <property type="project" value="InterPro"/>
</dbReference>
<dbReference type="Gene3D" id="3.30.230.10">
    <property type="match status" value="1"/>
</dbReference>
<dbReference type="Gene3D" id="3.30.70.890">
    <property type="entry name" value="GHMP kinase, C-terminal domain"/>
    <property type="match status" value="1"/>
</dbReference>
<dbReference type="HAMAP" id="MF_00061">
    <property type="entry name" value="IspE"/>
    <property type="match status" value="1"/>
</dbReference>
<dbReference type="InterPro" id="IPR013750">
    <property type="entry name" value="GHMP_kinase_C_dom"/>
</dbReference>
<dbReference type="InterPro" id="IPR036554">
    <property type="entry name" value="GHMP_kinase_C_sf"/>
</dbReference>
<dbReference type="InterPro" id="IPR006204">
    <property type="entry name" value="GHMP_kinase_N_dom"/>
</dbReference>
<dbReference type="InterPro" id="IPR004424">
    <property type="entry name" value="IspE"/>
</dbReference>
<dbReference type="InterPro" id="IPR020568">
    <property type="entry name" value="Ribosomal_Su5_D2-typ_SF"/>
</dbReference>
<dbReference type="InterPro" id="IPR014721">
    <property type="entry name" value="Ribsml_uS5_D2-typ_fold_subgr"/>
</dbReference>
<dbReference type="NCBIfam" id="TIGR00154">
    <property type="entry name" value="ispE"/>
    <property type="match status" value="1"/>
</dbReference>
<dbReference type="PANTHER" id="PTHR43527">
    <property type="entry name" value="4-DIPHOSPHOCYTIDYL-2-C-METHYL-D-ERYTHRITOL KINASE, CHLOROPLASTIC"/>
    <property type="match status" value="1"/>
</dbReference>
<dbReference type="PANTHER" id="PTHR43527:SF2">
    <property type="entry name" value="4-DIPHOSPHOCYTIDYL-2-C-METHYL-D-ERYTHRITOL KINASE, CHLOROPLASTIC"/>
    <property type="match status" value="1"/>
</dbReference>
<dbReference type="Pfam" id="PF08544">
    <property type="entry name" value="GHMP_kinases_C"/>
    <property type="match status" value="1"/>
</dbReference>
<dbReference type="Pfam" id="PF00288">
    <property type="entry name" value="GHMP_kinases_N"/>
    <property type="match status" value="1"/>
</dbReference>
<dbReference type="PIRSF" id="PIRSF010376">
    <property type="entry name" value="IspE"/>
    <property type="match status" value="1"/>
</dbReference>
<dbReference type="SUPFAM" id="SSF55060">
    <property type="entry name" value="GHMP Kinase, C-terminal domain"/>
    <property type="match status" value="1"/>
</dbReference>
<dbReference type="SUPFAM" id="SSF54211">
    <property type="entry name" value="Ribosomal protein S5 domain 2-like"/>
    <property type="match status" value="1"/>
</dbReference>
<protein>
    <recommendedName>
        <fullName evidence="1">4-diphosphocytidyl-2-C-methyl-D-erythritol kinase</fullName>
        <shortName evidence="1">CMK</shortName>
        <ecNumber evidence="1">2.7.1.148</ecNumber>
    </recommendedName>
    <alternativeName>
        <fullName evidence="1">4-(cytidine-5'-diphospho)-2-C-methyl-D-erythritol kinase</fullName>
    </alternativeName>
</protein>
<name>ISPE_GLOC7</name>
<evidence type="ECO:0000255" key="1">
    <source>
        <dbReference type="HAMAP-Rule" id="MF_00061"/>
    </source>
</evidence>
<reference key="1">
    <citation type="journal article" date="2011" name="MBio">
        <title>Novel metabolic attributes of the genus Cyanothece, comprising a group of unicellular nitrogen-fixing Cyanobacteria.</title>
        <authorList>
            <person name="Bandyopadhyay A."/>
            <person name="Elvitigala T."/>
            <person name="Welsh E."/>
            <person name="Stockel J."/>
            <person name="Liberton M."/>
            <person name="Min H."/>
            <person name="Sherman L.A."/>
            <person name="Pakrasi H.B."/>
        </authorList>
    </citation>
    <scope>NUCLEOTIDE SEQUENCE [LARGE SCALE GENOMIC DNA]</scope>
    <source>
        <strain>PCC 7424</strain>
    </source>
</reference>
<proteinExistence type="inferred from homology"/>
<accession>B7K961</accession>
<comment type="function">
    <text evidence="1">Catalyzes the phosphorylation of the position 2 hydroxy group of 4-diphosphocytidyl-2C-methyl-D-erythritol.</text>
</comment>
<comment type="catalytic activity">
    <reaction evidence="1">
        <text>4-CDP-2-C-methyl-D-erythritol + ATP = 4-CDP-2-C-methyl-D-erythritol 2-phosphate + ADP + H(+)</text>
        <dbReference type="Rhea" id="RHEA:18437"/>
        <dbReference type="ChEBI" id="CHEBI:15378"/>
        <dbReference type="ChEBI" id="CHEBI:30616"/>
        <dbReference type="ChEBI" id="CHEBI:57823"/>
        <dbReference type="ChEBI" id="CHEBI:57919"/>
        <dbReference type="ChEBI" id="CHEBI:456216"/>
        <dbReference type="EC" id="2.7.1.148"/>
    </reaction>
</comment>
<comment type="pathway">
    <text evidence="1">Isoprenoid biosynthesis; isopentenyl diphosphate biosynthesis via DXP pathway; isopentenyl diphosphate from 1-deoxy-D-xylulose 5-phosphate: step 3/6.</text>
</comment>
<comment type="similarity">
    <text evidence="1">Belongs to the GHMP kinase family. IspE subfamily.</text>
</comment>